<comment type="function">
    <text evidence="1">Catalyzes the conversion of L-arabinose to L-ribulose.</text>
</comment>
<comment type="catalytic activity">
    <reaction evidence="1">
        <text>beta-L-arabinopyranose = L-ribulose</text>
        <dbReference type="Rhea" id="RHEA:14821"/>
        <dbReference type="ChEBI" id="CHEBI:16880"/>
        <dbReference type="ChEBI" id="CHEBI:40886"/>
        <dbReference type="EC" id="5.3.1.4"/>
    </reaction>
</comment>
<comment type="cofactor">
    <cofactor evidence="1">
        <name>Mn(2+)</name>
        <dbReference type="ChEBI" id="CHEBI:29035"/>
    </cofactor>
    <text evidence="1">Binds 1 Mn(2+) ion per subunit.</text>
</comment>
<comment type="pathway">
    <text evidence="1">Carbohydrate degradation; L-arabinose degradation via L-ribulose; D-xylulose 5-phosphate from L-arabinose (bacterial route): step 1/3.</text>
</comment>
<comment type="subunit">
    <text evidence="1">Homohexamer.</text>
</comment>
<comment type="PTM">
    <text>The N-terminus is probably modified.</text>
</comment>
<comment type="similarity">
    <text evidence="1">Belongs to the arabinose isomerase family.</text>
</comment>
<feature type="chain" id="PRO_0000198393" description="L-arabinose isomerase">
    <location>
        <begin position="1"/>
        <end position="500"/>
    </location>
</feature>
<feature type="binding site" evidence="1">
    <location>
        <position position="306"/>
    </location>
    <ligand>
        <name>Mn(2+)</name>
        <dbReference type="ChEBI" id="CHEBI:29035"/>
    </ligand>
</feature>
<feature type="binding site" evidence="1">
    <location>
        <position position="333"/>
    </location>
    <ligand>
        <name>Mn(2+)</name>
        <dbReference type="ChEBI" id="CHEBI:29035"/>
    </ligand>
</feature>
<feature type="binding site" evidence="1">
    <location>
        <position position="350"/>
    </location>
    <ligand>
        <name>Mn(2+)</name>
        <dbReference type="ChEBI" id="CHEBI:29035"/>
    </ligand>
</feature>
<feature type="binding site" evidence="1">
    <location>
        <position position="450"/>
    </location>
    <ligand>
        <name>Mn(2+)</name>
        <dbReference type="ChEBI" id="CHEBI:29035"/>
    </ligand>
</feature>
<feature type="sequence conflict" description="In Ref. 1; AAA27024." evidence="2" ref="1">
    <original>R</original>
    <variation>G</variation>
    <location>
        <position position="258"/>
    </location>
</feature>
<feature type="sequence conflict" description="In Ref. 1; AAA27024." evidence="2" ref="1">
    <original>A</original>
    <variation>R</variation>
    <location>
        <position position="425"/>
    </location>
</feature>
<sequence>MTIFDNYEVWFVIGSQHLYGAETLRQVTQHAEHVVNALNTEAKLPCKLVLKPLGTSPDEITAICRDANYDDRCAGLVVWLHTFSPAKMWINGLSILNKPLLQFHTQFNAALPWDSIDMDFMNLNQTAHGGREFGFIGARMRQQHAVVTGHWQDKEAHTRIGAWMRQAVSKQDTRQLKVCRFGDNMREVAVTDGDKVAAQIKFGFSVNTWAVGDLVQVVNSIGDGDINALIDEYESSYTLTPATQIHGDKRQNVREAARIELGMKRFLEQGGFHAFTTTFEDLHGLKQLPGLAVQRLMQQGYGFAGEGDWKTAALLRIMKVMSTGLQGGTSFMEDYTYHFEKGNDLVLGSHMLEVCPSIAVEEKPILDVQHLGIGGKEDPARLIFNTQTGPAIVASLIDLGDRYRLLVNCIDTVKTPHSLPKLPVANALWKAQPDLPTASEAWILAGGAHHTVFSHALDLNDMRQFAEIHDIEIAVIDNDTHLPAFKDALRWNEVYYGFKR</sequence>
<dbReference type="EC" id="5.3.1.4" evidence="1"/>
<dbReference type="EMBL" id="M11047">
    <property type="protein sequence ID" value="AAA27024.1"/>
    <property type="molecule type" value="Genomic_DNA"/>
</dbReference>
<dbReference type="EMBL" id="AE006468">
    <property type="protein sequence ID" value="AAL19066.1"/>
    <property type="molecule type" value="Genomic_DNA"/>
</dbReference>
<dbReference type="PIR" id="A24985">
    <property type="entry name" value="ISEBAB"/>
</dbReference>
<dbReference type="RefSeq" id="NP_459107.1">
    <property type="nucleotide sequence ID" value="NC_003197.2"/>
</dbReference>
<dbReference type="RefSeq" id="WP_000151691.1">
    <property type="nucleotide sequence ID" value="NC_003197.2"/>
</dbReference>
<dbReference type="SMR" id="P06189"/>
<dbReference type="STRING" id="99287.STM0102"/>
<dbReference type="PaxDb" id="99287-STM0102"/>
<dbReference type="GeneID" id="1251620"/>
<dbReference type="KEGG" id="stm:STM0102"/>
<dbReference type="PATRIC" id="fig|99287.12.peg.105"/>
<dbReference type="HOGENOM" id="CLU_045663_0_0_6"/>
<dbReference type="OMA" id="LMEDYTY"/>
<dbReference type="PhylomeDB" id="P06189"/>
<dbReference type="BioCyc" id="SENT99287:STM0102-MONOMER"/>
<dbReference type="BRENDA" id="5.3.1.4">
    <property type="organism ID" value="5542"/>
</dbReference>
<dbReference type="UniPathway" id="UPA00145">
    <property type="reaction ID" value="UER00565"/>
</dbReference>
<dbReference type="Proteomes" id="UP000001014">
    <property type="component" value="Chromosome"/>
</dbReference>
<dbReference type="GO" id="GO:0005829">
    <property type="term" value="C:cytosol"/>
    <property type="evidence" value="ECO:0000318"/>
    <property type="project" value="GO_Central"/>
</dbReference>
<dbReference type="GO" id="GO:0008733">
    <property type="term" value="F:L-arabinose isomerase activity"/>
    <property type="evidence" value="ECO:0000318"/>
    <property type="project" value="GO_Central"/>
</dbReference>
<dbReference type="GO" id="GO:0030145">
    <property type="term" value="F:manganese ion binding"/>
    <property type="evidence" value="ECO:0007669"/>
    <property type="project" value="UniProtKB-UniRule"/>
</dbReference>
<dbReference type="GO" id="GO:0019569">
    <property type="term" value="P:L-arabinose catabolic process to xylulose 5-phosphate"/>
    <property type="evidence" value="ECO:0000318"/>
    <property type="project" value="GO_Central"/>
</dbReference>
<dbReference type="CDD" id="cd03557">
    <property type="entry name" value="L-arabinose_isomerase"/>
    <property type="match status" value="1"/>
</dbReference>
<dbReference type="FunFam" id="3.40.50.10940:FF:000001">
    <property type="entry name" value="L-arabinose isomerase"/>
    <property type="match status" value="1"/>
</dbReference>
<dbReference type="Gene3D" id="3.40.50.10940">
    <property type="match status" value="1"/>
</dbReference>
<dbReference type="HAMAP" id="MF_00519">
    <property type="entry name" value="Arabinose_Isome"/>
    <property type="match status" value="1"/>
</dbReference>
<dbReference type="InterPro" id="IPR024664">
    <property type="entry name" value="Ara_Isoase_C"/>
</dbReference>
<dbReference type="InterPro" id="IPR055390">
    <property type="entry name" value="AraA_central"/>
</dbReference>
<dbReference type="InterPro" id="IPR055389">
    <property type="entry name" value="AraA_N"/>
</dbReference>
<dbReference type="InterPro" id="IPR038583">
    <property type="entry name" value="AraA_N_sf"/>
</dbReference>
<dbReference type="InterPro" id="IPR004216">
    <property type="entry name" value="Fuc/Ara_isomerase_C"/>
</dbReference>
<dbReference type="InterPro" id="IPR009015">
    <property type="entry name" value="Fucose_isomerase_N/cen_sf"/>
</dbReference>
<dbReference type="InterPro" id="IPR003762">
    <property type="entry name" value="Lara_isomerase"/>
</dbReference>
<dbReference type="NCBIfam" id="NF002795">
    <property type="entry name" value="PRK02929.1"/>
    <property type="match status" value="1"/>
</dbReference>
<dbReference type="PANTHER" id="PTHR38464">
    <property type="entry name" value="L-ARABINOSE ISOMERASE"/>
    <property type="match status" value="1"/>
</dbReference>
<dbReference type="PANTHER" id="PTHR38464:SF1">
    <property type="entry name" value="L-ARABINOSE ISOMERASE"/>
    <property type="match status" value="1"/>
</dbReference>
<dbReference type="Pfam" id="PF24856">
    <property type="entry name" value="AraA_central"/>
    <property type="match status" value="1"/>
</dbReference>
<dbReference type="Pfam" id="PF02610">
    <property type="entry name" value="AraA_N"/>
    <property type="match status" value="1"/>
</dbReference>
<dbReference type="Pfam" id="PF11762">
    <property type="entry name" value="Arabinose_Iso_C"/>
    <property type="match status" value="1"/>
</dbReference>
<dbReference type="PIRSF" id="PIRSF001478">
    <property type="entry name" value="L-ara_isomerase"/>
    <property type="match status" value="1"/>
</dbReference>
<dbReference type="SUPFAM" id="SSF50443">
    <property type="entry name" value="FucI/AraA C-terminal domain-like"/>
    <property type="match status" value="1"/>
</dbReference>
<dbReference type="SUPFAM" id="SSF53743">
    <property type="entry name" value="FucI/AraA N-terminal and middle domains"/>
    <property type="match status" value="1"/>
</dbReference>
<evidence type="ECO:0000255" key="1">
    <source>
        <dbReference type="HAMAP-Rule" id="MF_00519"/>
    </source>
</evidence>
<evidence type="ECO:0000305" key="2"/>
<name>ARAA_SALTY</name>
<protein>
    <recommendedName>
        <fullName evidence="1">L-arabinose isomerase</fullName>
        <ecNumber evidence="1">5.3.1.4</ecNumber>
    </recommendedName>
</protein>
<reference key="1">
    <citation type="journal article" date="1985" name="Gene">
        <title>The araBAD operon of Salmonella typhimurium LT2. II. Nucleotide sequence of araA and primary structure of its product, L-arabinose isomerase.</title>
        <authorList>
            <person name="Lin H.-C."/>
            <person name="Lei S.-P."/>
            <person name="Wilcox G."/>
        </authorList>
    </citation>
    <scope>NUCLEOTIDE SEQUENCE [GENOMIC DNA]</scope>
    <source>
        <strain>LT2</strain>
    </source>
</reference>
<reference key="2">
    <citation type="journal article" date="2001" name="Nature">
        <title>Complete genome sequence of Salmonella enterica serovar Typhimurium LT2.</title>
        <authorList>
            <person name="McClelland M."/>
            <person name="Sanderson K.E."/>
            <person name="Spieth J."/>
            <person name="Clifton S.W."/>
            <person name="Latreille P."/>
            <person name="Courtney L."/>
            <person name="Porwollik S."/>
            <person name="Ali J."/>
            <person name="Dante M."/>
            <person name="Du F."/>
            <person name="Hou S."/>
            <person name="Layman D."/>
            <person name="Leonard S."/>
            <person name="Nguyen C."/>
            <person name="Scott K."/>
            <person name="Holmes A."/>
            <person name="Grewal N."/>
            <person name="Mulvaney E."/>
            <person name="Ryan E."/>
            <person name="Sun H."/>
            <person name="Florea L."/>
            <person name="Miller W."/>
            <person name="Stoneking T."/>
            <person name="Nhan M."/>
            <person name="Waterston R."/>
            <person name="Wilson R.K."/>
        </authorList>
    </citation>
    <scope>NUCLEOTIDE SEQUENCE [LARGE SCALE GENOMIC DNA]</scope>
    <source>
        <strain>LT2 / SGSC1412 / ATCC 700720</strain>
    </source>
</reference>
<accession>P06189</accession>
<keyword id="KW-0054">Arabinose catabolism</keyword>
<keyword id="KW-0119">Carbohydrate metabolism</keyword>
<keyword id="KW-0413">Isomerase</keyword>
<keyword id="KW-0464">Manganese</keyword>
<keyword id="KW-0479">Metal-binding</keyword>
<keyword id="KW-1185">Reference proteome</keyword>
<proteinExistence type="inferred from homology"/>
<organism>
    <name type="scientific">Salmonella typhimurium (strain LT2 / SGSC1412 / ATCC 700720)</name>
    <dbReference type="NCBI Taxonomy" id="99287"/>
    <lineage>
        <taxon>Bacteria</taxon>
        <taxon>Pseudomonadati</taxon>
        <taxon>Pseudomonadota</taxon>
        <taxon>Gammaproteobacteria</taxon>
        <taxon>Enterobacterales</taxon>
        <taxon>Enterobacteriaceae</taxon>
        <taxon>Salmonella</taxon>
    </lineage>
</organism>
<gene>
    <name evidence="1" type="primary">araA</name>
    <name type="ordered locus">STM0102</name>
</gene>